<accession>Q6AYQ8</accession>
<evidence type="ECO:0000250" key="1">
    <source>
        <dbReference type="UniProtKB" id="Q6P587"/>
    </source>
</evidence>
<evidence type="ECO:0000250" key="2">
    <source>
        <dbReference type="UniProtKB" id="Q8R0F8"/>
    </source>
</evidence>
<evidence type="ECO:0000255" key="3"/>
<evidence type="ECO:0000305" key="4"/>
<evidence type="ECO:0000312" key="5">
    <source>
        <dbReference type="RGD" id="1304560"/>
    </source>
</evidence>
<evidence type="ECO:0007744" key="6">
    <source>
    </source>
</evidence>
<proteinExistence type="evidence at protein level"/>
<organism>
    <name type="scientific">Rattus norvegicus</name>
    <name type="common">Rat</name>
    <dbReference type="NCBI Taxonomy" id="10116"/>
    <lineage>
        <taxon>Eukaryota</taxon>
        <taxon>Metazoa</taxon>
        <taxon>Chordata</taxon>
        <taxon>Craniata</taxon>
        <taxon>Vertebrata</taxon>
        <taxon>Euteleostomi</taxon>
        <taxon>Mammalia</taxon>
        <taxon>Eutheria</taxon>
        <taxon>Euarchontoglires</taxon>
        <taxon>Glires</taxon>
        <taxon>Rodentia</taxon>
        <taxon>Myomorpha</taxon>
        <taxon>Muroidea</taxon>
        <taxon>Muridae</taxon>
        <taxon>Murinae</taxon>
        <taxon>Rattus</taxon>
    </lineage>
</organism>
<protein>
    <recommendedName>
        <fullName evidence="4">Oxaloacetate tautomerase FAHD1, mitochondrial</fullName>
        <ecNumber evidence="1">5.3.2.2</ecNumber>
    </recommendedName>
    <alternativeName>
        <fullName evidence="4">Acylpyruvase FAHD1</fullName>
        <ecNumber evidence="1">3.7.1.5</ecNumber>
    </alternativeName>
    <alternativeName>
        <fullName>Fumarylacetoacetate hydrolase domain-containing protein 1</fullName>
    </alternativeName>
    <alternativeName>
        <fullName evidence="1">Oxaloacetate decarboxylase</fullName>
        <shortName evidence="1">OAA decarboxylase</shortName>
        <ecNumber evidence="1">4.1.1.112</ecNumber>
    </alternativeName>
</protein>
<gene>
    <name evidence="5" type="primary">Fahd1</name>
</gene>
<dbReference type="EC" id="5.3.2.2" evidence="1"/>
<dbReference type="EC" id="3.7.1.5" evidence="1"/>
<dbReference type="EC" id="4.1.1.112" evidence="1"/>
<dbReference type="EMBL" id="BC078950">
    <property type="protein sequence ID" value="AAH78950.1"/>
    <property type="molecule type" value="mRNA"/>
</dbReference>
<dbReference type="RefSeq" id="NP_001020162.1">
    <property type="nucleotide sequence ID" value="NM_001024991.1"/>
</dbReference>
<dbReference type="SMR" id="Q6AYQ8"/>
<dbReference type="FunCoup" id="Q6AYQ8">
    <property type="interactions" value="2337"/>
</dbReference>
<dbReference type="STRING" id="10116.ENSRNOP00000019767"/>
<dbReference type="iPTMnet" id="Q6AYQ8"/>
<dbReference type="PhosphoSitePlus" id="Q6AYQ8"/>
<dbReference type="jPOST" id="Q6AYQ8"/>
<dbReference type="PaxDb" id="10116-ENSRNOP00000019767"/>
<dbReference type="Ensembl" id="ENSRNOT00000019767.7">
    <property type="protein sequence ID" value="ENSRNOP00000019767.4"/>
    <property type="gene ID" value="ENSRNOG00000014727.7"/>
</dbReference>
<dbReference type="GeneID" id="302980"/>
<dbReference type="KEGG" id="rno:302980"/>
<dbReference type="UCSC" id="RGD:1304560">
    <property type="organism name" value="rat"/>
</dbReference>
<dbReference type="AGR" id="RGD:1304560"/>
<dbReference type="CTD" id="81889"/>
<dbReference type="RGD" id="1304560">
    <property type="gene designation" value="Fahd1"/>
</dbReference>
<dbReference type="eggNOG" id="KOG1535">
    <property type="taxonomic scope" value="Eukaryota"/>
</dbReference>
<dbReference type="GeneTree" id="ENSGT00940000160452"/>
<dbReference type="HOGENOM" id="CLU_028458_5_0_1"/>
<dbReference type="InParanoid" id="Q6AYQ8"/>
<dbReference type="OMA" id="NCRKVIC"/>
<dbReference type="OrthoDB" id="411064at2759"/>
<dbReference type="PhylomeDB" id="Q6AYQ8"/>
<dbReference type="Reactome" id="R-RNO-70268">
    <property type="pathway name" value="Pyruvate metabolism"/>
</dbReference>
<dbReference type="PRO" id="PR:Q6AYQ8"/>
<dbReference type="Proteomes" id="UP000002494">
    <property type="component" value="Chromosome 10"/>
</dbReference>
<dbReference type="Bgee" id="ENSRNOG00000014727">
    <property type="expression patterns" value="Expressed in kidney and 20 other cell types or tissues"/>
</dbReference>
<dbReference type="GO" id="GO:0005829">
    <property type="term" value="C:cytosol"/>
    <property type="evidence" value="ECO:0000250"/>
    <property type="project" value="UniProtKB"/>
</dbReference>
<dbReference type="GO" id="GO:0005739">
    <property type="term" value="C:mitochondrion"/>
    <property type="evidence" value="ECO:0000250"/>
    <property type="project" value="UniProtKB"/>
</dbReference>
<dbReference type="GO" id="GO:0005654">
    <property type="term" value="C:nucleoplasm"/>
    <property type="evidence" value="ECO:0007669"/>
    <property type="project" value="Ensembl"/>
</dbReference>
<dbReference type="GO" id="GO:0018773">
    <property type="term" value="F:acetylpyruvate hydrolase activity"/>
    <property type="evidence" value="ECO:0000250"/>
    <property type="project" value="UniProtKB"/>
</dbReference>
<dbReference type="GO" id="GO:0047621">
    <property type="term" value="F:acylpyruvate hydrolase activity"/>
    <property type="evidence" value="ECO:0007669"/>
    <property type="project" value="UniProtKB-EC"/>
</dbReference>
<dbReference type="GO" id="GO:0034545">
    <property type="term" value="F:fumarylpyruvate hydrolase activity"/>
    <property type="evidence" value="ECO:0000250"/>
    <property type="project" value="UniProtKB"/>
</dbReference>
<dbReference type="GO" id="GO:0046872">
    <property type="term" value="F:metal ion binding"/>
    <property type="evidence" value="ECO:0007669"/>
    <property type="project" value="UniProtKB-KW"/>
</dbReference>
<dbReference type="GO" id="GO:0008948">
    <property type="term" value="F:oxaloacetate decarboxylase activity"/>
    <property type="evidence" value="ECO:0000250"/>
    <property type="project" value="UniProtKB"/>
</dbReference>
<dbReference type="GO" id="GO:0050163">
    <property type="term" value="F:oxaloacetate tautomerase activity"/>
    <property type="evidence" value="ECO:0000250"/>
    <property type="project" value="UniProtKB"/>
</dbReference>
<dbReference type="GO" id="GO:0006107">
    <property type="term" value="P:oxaloacetate metabolic process"/>
    <property type="evidence" value="ECO:0000250"/>
    <property type="project" value="UniProtKB"/>
</dbReference>
<dbReference type="GO" id="GO:0006090">
    <property type="term" value="P:pyruvate metabolic process"/>
    <property type="evidence" value="ECO:0000266"/>
    <property type="project" value="RGD"/>
</dbReference>
<dbReference type="FunFam" id="3.90.850.10:FF:000003">
    <property type="entry name" value="Fumarylacetoacetate hydrolase domain-containing 1"/>
    <property type="match status" value="1"/>
</dbReference>
<dbReference type="Gene3D" id="3.90.850.10">
    <property type="entry name" value="Fumarylacetoacetase-like, C-terminal domain"/>
    <property type="match status" value="1"/>
</dbReference>
<dbReference type="InterPro" id="IPR011234">
    <property type="entry name" value="Fumarylacetoacetase-like_C"/>
</dbReference>
<dbReference type="InterPro" id="IPR036663">
    <property type="entry name" value="Fumarylacetoacetase_C_sf"/>
</dbReference>
<dbReference type="NCBIfam" id="NF007967">
    <property type="entry name" value="PRK10691.1"/>
    <property type="match status" value="1"/>
</dbReference>
<dbReference type="PANTHER" id="PTHR11820">
    <property type="entry name" value="ACYLPYRUVASE"/>
    <property type="match status" value="1"/>
</dbReference>
<dbReference type="PANTHER" id="PTHR11820:SF7">
    <property type="entry name" value="ACYLPYRUVASE FAHD1, MITOCHONDRIAL"/>
    <property type="match status" value="1"/>
</dbReference>
<dbReference type="Pfam" id="PF01557">
    <property type="entry name" value="FAA_hydrolase"/>
    <property type="match status" value="1"/>
</dbReference>
<dbReference type="SUPFAM" id="SSF56529">
    <property type="entry name" value="FAH"/>
    <property type="match status" value="1"/>
</dbReference>
<keyword id="KW-0007">Acetylation</keyword>
<keyword id="KW-0963">Cytoplasm</keyword>
<keyword id="KW-0378">Hydrolase</keyword>
<keyword id="KW-0413">Isomerase</keyword>
<keyword id="KW-0456">Lyase</keyword>
<keyword id="KW-0460">Magnesium</keyword>
<keyword id="KW-0464">Manganese</keyword>
<keyword id="KW-0479">Metal-binding</keyword>
<keyword id="KW-0496">Mitochondrion</keyword>
<keyword id="KW-0597">Phosphoprotein</keyword>
<keyword id="KW-1185">Reference proteome</keyword>
<keyword id="KW-0809">Transit peptide</keyword>
<reference key="1">
    <citation type="journal article" date="2004" name="Genome Res.">
        <title>The status, quality, and expansion of the NIH full-length cDNA project: the Mammalian Gene Collection (MGC).</title>
        <authorList>
            <consortium name="The MGC Project Team"/>
        </authorList>
    </citation>
    <scope>NUCLEOTIDE SEQUENCE [LARGE SCALE MRNA]</scope>
    <source>
        <tissue>Kidney</tissue>
    </source>
</reference>
<reference key="2">
    <citation type="journal article" date="2012" name="Nat. Commun.">
        <title>Quantitative maps of protein phosphorylation sites across 14 different rat organs and tissues.</title>
        <authorList>
            <person name="Lundby A."/>
            <person name="Secher A."/>
            <person name="Lage K."/>
            <person name="Nordsborg N.B."/>
            <person name="Dmytriyev A."/>
            <person name="Lundby C."/>
            <person name="Olsen J.V."/>
        </authorList>
    </citation>
    <scope>PHOSPHORYLATION [LARGE SCALE ANALYSIS] AT SER-37</scope>
    <scope>IDENTIFICATION BY MASS SPECTROMETRY [LARGE SCALE ANALYSIS]</scope>
</reference>
<sequence>MASTKPLSRFWEWGKNIVCVGRNYADHVKEMRSTVLSEPVLFLKPSTAYAPEGSPVLMPAYCRNLHHEVELGVLLGRRGEAVPEAAAMDYVAGYALCLDMTARDVQDECKKKGLPWTLAKSFTSSCPVSAFVPKEKIPDPHALRLWLKVNGELRQEGKTSSMIFSIPYIISYVSKIITLEEGDLILTGTPKGVGAVKENDEIEAGIDGVVSMRFKVERSKY</sequence>
<name>FAHD1_RAT</name>
<comment type="function">
    <text evidence="1">Tautomerase that converts enol-oxaloacetate, a strong inhibitor of succinate dehydrogenase, to the physiological keto form of oxaloacetate. It is thereby required to maximize aerobic respiration efficiency by preventing succinate dehydrogenase inhibition. Also acts as a weak oxaloacetate decarboxylase (ODx), catalyzing the decarboxylation of oxaloacetate (OAA) to pyruvate and CO(2), and as such is likely a regulatory enzyme in the TCA cycle. Also displays acylpyruvase activity, being able to hydrolyze acetylpyruvate and fumarylpyruvate in vitro.</text>
</comment>
<comment type="catalytic activity">
    <reaction evidence="1">
        <text>oxaloacetate = enol-oxaloacetate</text>
        <dbReference type="Rhea" id="RHEA:16021"/>
        <dbReference type="ChEBI" id="CHEBI:16452"/>
        <dbReference type="ChEBI" id="CHEBI:17479"/>
        <dbReference type="EC" id="5.3.2.2"/>
    </reaction>
    <physiologicalReaction direction="right-to-left" evidence="1">
        <dbReference type="Rhea" id="RHEA:16023"/>
    </physiologicalReaction>
</comment>
<comment type="catalytic activity">
    <reaction evidence="1">
        <text>oxaloacetate + H(+) = pyruvate + CO2</text>
        <dbReference type="Rhea" id="RHEA:15641"/>
        <dbReference type="ChEBI" id="CHEBI:15361"/>
        <dbReference type="ChEBI" id="CHEBI:15378"/>
        <dbReference type="ChEBI" id="CHEBI:16452"/>
        <dbReference type="ChEBI" id="CHEBI:16526"/>
        <dbReference type="EC" id="4.1.1.112"/>
    </reaction>
</comment>
<comment type="catalytic activity">
    <reaction evidence="1">
        <text>a 3-acylpyruvate + H2O = a carboxylate + pyruvate + H(+)</text>
        <dbReference type="Rhea" id="RHEA:19009"/>
        <dbReference type="ChEBI" id="CHEBI:15361"/>
        <dbReference type="ChEBI" id="CHEBI:15377"/>
        <dbReference type="ChEBI" id="CHEBI:15378"/>
        <dbReference type="ChEBI" id="CHEBI:29067"/>
        <dbReference type="ChEBI" id="CHEBI:57278"/>
        <dbReference type="EC" id="3.7.1.5"/>
    </reaction>
</comment>
<comment type="catalytic activity">
    <reaction evidence="1">
        <text>acetylpyruvate + H2O = acetate + pyruvate + H(+)</text>
        <dbReference type="Rhea" id="RHEA:16097"/>
        <dbReference type="ChEBI" id="CHEBI:15360"/>
        <dbReference type="ChEBI" id="CHEBI:15361"/>
        <dbReference type="ChEBI" id="CHEBI:15377"/>
        <dbReference type="ChEBI" id="CHEBI:15378"/>
        <dbReference type="ChEBI" id="CHEBI:30089"/>
    </reaction>
</comment>
<comment type="catalytic activity">
    <reaction evidence="1">
        <text>3-fumarylpyruvate + H2O = fumarate + pyruvate + H(+)</text>
        <dbReference type="Rhea" id="RHEA:26168"/>
        <dbReference type="ChEBI" id="CHEBI:15361"/>
        <dbReference type="ChEBI" id="CHEBI:15377"/>
        <dbReference type="ChEBI" id="CHEBI:15378"/>
        <dbReference type="ChEBI" id="CHEBI:16854"/>
        <dbReference type="ChEBI" id="CHEBI:29806"/>
    </reaction>
</comment>
<comment type="cofactor">
    <cofactor evidence="1">
        <name>Mg(2+)</name>
        <dbReference type="ChEBI" id="CHEBI:18420"/>
    </cofactor>
    <cofactor evidence="1">
        <name>Mn(2+)</name>
        <dbReference type="ChEBI" id="CHEBI:29035"/>
    </cofactor>
    <text evidence="1">Requires a divalent metal cation for activity.</text>
</comment>
<comment type="activity regulation">
    <text evidence="2">Oxaloacetate decarboxylation is competitively inhibited by oxalate.</text>
</comment>
<comment type="subunit">
    <text evidence="1">Homodimer.</text>
</comment>
<comment type="subcellular location">
    <subcellularLocation>
        <location evidence="1">Mitochondrion</location>
    </subcellularLocation>
    <subcellularLocation>
        <location evidence="1">Cytoplasm</location>
        <location evidence="1">Cytosol</location>
    </subcellularLocation>
</comment>
<comment type="similarity">
    <text evidence="4">Belongs to the FAH family.</text>
</comment>
<feature type="transit peptide" description="Mitochondrion" evidence="3">
    <location>
        <begin position="1"/>
        <end position="24"/>
    </location>
</feature>
<feature type="chain" id="PRO_0000156832" description="Oxaloacetate tautomerase FAHD1, mitochondrial">
    <location>
        <begin position="25"/>
        <end position="221"/>
    </location>
</feature>
<feature type="binding site" evidence="1">
    <location>
        <position position="68"/>
    </location>
    <ligand>
        <name>Mg(2+)</name>
        <dbReference type="ChEBI" id="CHEBI:18420"/>
    </ligand>
</feature>
<feature type="binding site" evidence="1">
    <location>
        <position position="70"/>
    </location>
    <ligand>
        <name>Mg(2+)</name>
        <dbReference type="ChEBI" id="CHEBI:18420"/>
    </ligand>
</feature>
<feature type="binding site" evidence="1">
    <location>
        <position position="99"/>
    </location>
    <ligand>
        <name>Mg(2+)</name>
        <dbReference type="ChEBI" id="CHEBI:18420"/>
    </ligand>
</feature>
<feature type="modified residue" description="Phosphoserine" evidence="6">
    <location>
        <position position="37"/>
    </location>
</feature>
<feature type="modified residue" description="N6-acetyllysine" evidence="2">
    <location>
        <position position="110"/>
    </location>
</feature>
<feature type="modified residue" description="N6-succinyllysine" evidence="2">
    <location>
        <position position="112"/>
    </location>
</feature>